<protein>
    <recommendedName>
        <fullName evidence="11">TM2 domain-containing protein almondex</fullName>
        <shortName evidence="11">TM2D3</shortName>
    </recommendedName>
    <alternativeName>
        <fullName evidence="10">Beta-amyloid peptide binding-like protein amx</fullName>
        <shortName evidence="10">dBBP-like protein</shortName>
        <shortName evidence="10">dBLP</shortName>
    </alternativeName>
</protein>
<proteinExistence type="evidence at protein level"/>
<evidence type="ECO:0000255" key="1"/>
<evidence type="ECO:0000255" key="2">
    <source>
        <dbReference type="PROSITE-ProRule" id="PRU00498"/>
    </source>
</evidence>
<evidence type="ECO:0000256" key="3">
    <source>
        <dbReference type="SAM" id="MobiDB-lite"/>
    </source>
</evidence>
<evidence type="ECO:0000269" key="4">
    <source>
    </source>
</evidence>
<evidence type="ECO:0000269" key="5">
    <source>
    </source>
</evidence>
<evidence type="ECO:0000269" key="6">
    <source>
    </source>
</evidence>
<evidence type="ECO:0000269" key="7">
    <source>
    </source>
</evidence>
<evidence type="ECO:0000269" key="8">
    <source>
    </source>
</evidence>
<evidence type="ECO:0000303" key="9">
    <source>
    </source>
</evidence>
<evidence type="ECO:0000303" key="10">
    <source>
    </source>
</evidence>
<evidence type="ECO:0000305" key="11"/>
<evidence type="ECO:0000312" key="12">
    <source>
        <dbReference type="FlyBase" id="FBgn0000077"/>
    </source>
</evidence>
<evidence type="ECO:0000312" key="13">
    <source>
        <dbReference type="Proteomes" id="UP000000803"/>
    </source>
</evidence>
<dbReference type="EMBL" id="AF217797">
    <property type="protein sequence ID" value="AAF36924.2"/>
    <property type="molecule type" value="mRNA"/>
</dbReference>
<dbReference type="EMBL" id="AE014298">
    <property type="protein sequence ID" value="AAF46474.2"/>
    <property type="molecule type" value="Genomic_DNA"/>
</dbReference>
<dbReference type="EMBL" id="AF181623">
    <property type="protein sequence ID" value="AAD55409.1"/>
    <property type="molecule type" value="mRNA"/>
</dbReference>
<dbReference type="RefSeq" id="NP_001245591.1">
    <property type="nucleotide sequence ID" value="NM_001258662.2"/>
</dbReference>
<dbReference type="RefSeq" id="NP_524644.1">
    <property type="nucleotide sequence ID" value="NM_079905.3"/>
</dbReference>
<dbReference type="BioGRID" id="68680">
    <property type="interactions" value="2"/>
</dbReference>
<dbReference type="FunCoup" id="Q9U4H5">
    <property type="interactions" value="404"/>
</dbReference>
<dbReference type="STRING" id="7227.FBpp0071266"/>
<dbReference type="GlyCosmos" id="Q9U4H5">
    <property type="glycosylation" value="6 sites, No reported glycans"/>
</dbReference>
<dbReference type="GlyGen" id="Q9U4H5">
    <property type="glycosylation" value="6 sites"/>
</dbReference>
<dbReference type="PaxDb" id="7227-FBpp0071266"/>
<dbReference type="DNASU" id="43869"/>
<dbReference type="EnsemblMetazoa" id="FBtr0071331">
    <property type="protein sequence ID" value="FBpp0071266"/>
    <property type="gene ID" value="FBgn0000077"/>
</dbReference>
<dbReference type="EnsemblMetazoa" id="FBtr0307281">
    <property type="protein sequence ID" value="FBpp0298282"/>
    <property type="gene ID" value="FBgn0000077"/>
</dbReference>
<dbReference type="GeneID" id="43869"/>
<dbReference type="KEGG" id="dme:Dmel_CG12127"/>
<dbReference type="UCSC" id="CG12127-RA">
    <property type="organism name" value="d. melanogaster"/>
</dbReference>
<dbReference type="AGR" id="FB:FBgn0000077"/>
<dbReference type="CTD" id="43869"/>
<dbReference type="FlyBase" id="FBgn0000077">
    <property type="gene designation" value="amx"/>
</dbReference>
<dbReference type="VEuPathDB" id="VectorBase:FBgn0000077"/>
<dbReference type="eggNOG" id="KOG4272">
    <property type="taxonomic scope" value="Eukaryota"/>
</dbReference>
<dbReference type="GeneTree" id="ENSGT00940000158389"/>
<dbReference type="HOGENOM" id="CLU_084872_0_0_1"/>
<dbReference type="InParanoid" id="Q9U4H5"/>
<dbReference type="OMA" id="HANCNSA"/>
<dbReference type="OrthoDB" id="10257855at2759"/>
<dbReference type="PhylomeDB" id="Q9U4H5"/>
<dbReference type="BioGRID-ORCS" id="43869">
    <property type="hits" value="0 hits in 1 CRISPR screen"/>
</dbReference>
<dbReference type="GenomeRNAi" id="43869"/>
<dbReference type="PRO" id="PR:Q9U4H5"/>
<dbReference type="Proteomes" id="UP000000803">
    <property type="component" value="Chromosome X"/>
</dbReference>
<dbReference type="Bgee" id="FBgn0000077">
    <property type="expression patterns" value="Expressed in adult middle midgut class I enteroendocrine cell in adult midgut (Drosophila) and 58 other cell types or tissues"/>
</dbReference>
<dbReference type="ExpressionAtlas" id="Q9U4H5">
    <property type="expression patterns" value="baseline and differential"/>
</dbReference>
<dbReference type="GO" id="GO:0005886">
    <property type="term" value="C:plasma membrane"/>
    <property type="evidence" value="ECO:0000255"/>
    <property type="project" value="FlyBase"/>
</dbReference>
<dbReference type="GO" id="GO:0031982">
    <property type="term" value="C:vesicle"/>
    <property type="evidence" value="ECO:0007669"/>
    <property type="project" value="UniProtKB-SubCell"/>
</dbReference>
<dbReference type="GO" id="GO:0001713">
    <property type="term" value="P:ectodermal cell fate determination"/>
    <property type="evidence" value="ECO:0000315"/>
    <property type="project" value="UniProtKB"/>
</dbReference>
<dbReference type="GO" id="GO:0046331">
    <property type="term" value="P:lateral inhibition"/>
    <property type="evidence" value="ECO:0000315"/>
    <property type="project" value="FlyBase"/>
</dbReference>
<dbReference type="GO" id="GO:0007498">
    <property type="term" value="P:mesoderm development"/>
    <property type="evidence" value="ECO:0000315"/>
    <property type="project" value="FlyBase"/>
</dbReference>
<dbReference type="GO" id="GO:0007400">
    <property type="term" value="P:neuroblast fate determination"/>
    <property type="evidence" value="ECO:0000315"/>
    <property type="project" value="FlyBase"/>
</dbReference>
<dbReference type="GO" id="GO:0007219">
    <property type="term" value="P:Notch signaling pathway"/>
    <property type="evidence" value="ECO:0007669"/>
    <property type="project" value="UniProtKB-KW"/>
</dbReference>
<dbReference type="GO" id="GO:0045747">
    <property type="term" value="P:positive regulation of Notch signaling pathway"/>
    <property type="evidence" value="ECO:0000315"/>
    <property type="project" value="UniProtKB"/>
</dbReference>
<dbReference type="InterPro" id="IPR007829">
    <property type="entry name" value="TM2"/>
</dbReference>
<dbReference type="InterPro" id="IPR050932">
    <property type="entry name" value="TM2D1-3-like"/>
</dbReference>
<dbReference type="PANTHER" id="PTHR21016">
    <property type="entry name" value="BETA-AMYLOID BINDING PROTEIN-RELATED"/>
    <property type="match status" value="1"/>
</dbReference>
<dbReference type="PANTHER" id="PTHR21016:SF7">
    <property type="entry name" value="TM2 DOMAIN-CONTAINING PROTEIN 3"/>
    <property type="match status" value="1"/>
</dbReference>
<dbReference type="Pfam" id="PF05154">
    <property type="entry name" value="TM2"/>
    <property type="match status" value="1"/>
</dbReference>
<feature type="signal peptide" evidence="11">
    <location>
        <begin position="1"/>
        <end position="32"/>
    </location>
</feature>
<feature type="chain" id="PRO_0000298999" description="TM2 domain-containing protein almondex">
    <location>
        <begin position="33"/>
        <end position="284"/>
    </location>
</feature>
<feature type="topological domain" description="Extracellular" evidence="11">
    <location>
        <begin position="33"/>
        <end position="225"/>
    </location>
</feature>
<feature type="transmembrane region" description="Helical" evidence="1">
    <location>
        <begin position="226"/>
        <end position="246"/>
    </location>
</feature>
<feature type="topological domain" description="Cytoplasmic" evidence="11">
    <location>
        <begin position="247"/>
        <end position="249"/>
    </location>
</feature>
<feature type="transmembrane region" description="Helical" evidence="1">
    <location>
        <begin position="250"/>
        <end position="270"/>
    </location>
</feature>
<feature type="topological domain" description="Extracellular" evidence="11">
    <location>
        <begin position="271"/>
        <end position="284"/>
    </location>
</feature>
<feature type="domain" description="TM2" evidence="1">
    <location>
        <begin position="220"/>
        <end position="267"/>
    </location>
</feature>
<feature type="region of interest" description="Disordered" evidence="3">
    <location>
        <begin position="33"/>
        <end position="63"/>
    </location>
</feature>
<feature type="compositionally biased region" description="Basic and acidic residues" evidence="3">
    <location>
        <begin position="42"/>
        <end position="51"/>
    </location>
</feature>
<feature type="compositionally biased region" description="Low complexity" evidence="3">
    <location>
        <begin position="52"/>
        <end position="63"/>
    </location>
</feature>
<feature type="glycosylation site" description="N-linked (GlcNAc...) asparagine" evidence="2">
    <location>
        <position position="53"/>
    </location>
</feature>
<feature type="glycosylation site" description="N-linked (GlcNAc...) asparagine" evidence="2">
    <location>
        <position position="89"/>
    </location>
</feature>
<feature type="glycosylation site" description="N-linked (GlcNAc...) asparagine" evidence="2">
    <location>
        <position position="141"/>
    </location>
</feature>
<feature type="glycosylation site" description="N-linked (GlcNAc...) asparagine" evidence="2">
    <location>
        <position position="194"/>
    </location>
</feature>
<feature type="glycosylation site" description="N-linked (GlcNAc...) asparagine" evidence="2">
    <location>
        <position position="206"/>
    </location>
</feature>
<feature type="glycosylation site" description="N-linked (GlcNAc...) asparagine" evidence="2">
    <location>
        <position position="216"/>
    </location>
</feature>
<feature type="mutagenesis site" description="No effect on ability to rescue mutant phenotype." evidence="5">
    <original>LFR</original>
    <variation>RFG</variation>
    <location>
        <begin position="190"/>
        <end position="192"/>
    </location>
</feature>
<feature type="mutagenesis site" description="Loss of ability to rescue mutant phenotype." evidence="5">
    <original>DRF</original>
    <variation>NRL</variation>
    <location>
        <begin position="239"/>
        <end position="241"/>
    </location>
</feature>
<accession>Q9U4H5</accession>
<accession>Q9W361</accession>
<keyword id="KW-0217">Developmental protein</keyword>
<keyword id="KW-0325">Glycoprotein</keyword>
<keyword id="KW-0472">Membrane</keyword>
<keyword id="KW-0914">Notch signaling pathway</keyword>
<keyword id="KW-1185">Reference proteome</keyword>
<keyword id="KW-0732">Signal</keyword>
<keyword id="KW-0812">Transmembrane</keyword>
<keyword id="KW-1133">Transmembrane helix</keyword>
<name>TM2D3_DROME</name>
<organism evidence="13">
    <name type="scientific">Drosophila melanogaster</name>
    <name type="common">Fruit fly</name>
    <dbReference type="NCBI Taxonomy" id="7227"/>
    <lineage>
        <taxon>Eukaryota</taxon>
        <taxon>Metazoa</taxon>
        <taxon>Ecdysozoa</taxon>
        <taxon>Arthropoda</taxon>
        <taxon>Hexapoda</taxon>
        <taxon>Insecta</taxon>
        <taxon>Pterygota</taxon>
        <taxon>Neoptera</taxon>
        <taxon>Endopterygota</taxon>
        <taxon>Diptera</taxon>
        <taxon>Brachycera</taxon>
        <taxon>Muscomorpha</taxon>
        <taxon>Ephydroidea</taxon>
        <taxon>Drosophilidae</taxon>
        <taxon>Drosophila</taxon>
        <taxon>Sophophora</taxon>
    </lineage>
</organism>
<sequence length="284" mass="31364">MRLQRQCIVVNMRSAIVLIMIFVLTGIRNSETASGGNQMDLSDSKGDHKDNSNASNGNGNANDNEVYVPPLVSSMVAKSGGGAGGLLDNITAYSSSSSSSSSNGNNNMLCPYDKETPCDRLQFPCIRCNYNHGCIYGRDLNVTCEVINNVQCLGERSFQRQMNCRYCYQTEMWQQSCGQRSSCNSATDKLFRTNCTVHHDVLCLGNRSFTRNLRCNWTQGYRWSTALLISLTLGGFGADRFYLGHWQEGIGKLFSFGGLGVWTIIDVLLISMHYLGPADGSLYI</sequence>
<comment type="function">
    <text evidence="4 5 7 8">Positive regulator of Notch signaling during lateral inhibition and boundary formation (PubMed:14595834, PubMed:18331889, PubMed:34905536). Interacts with Notch signaling at the membrane, at the level of gamma-secretase-mediated S3 cleavage (PubMed:18331889, PubMed:34905536). May regulate Notch signaling by regulating the subcellular localization of N/Notch in a context dependent manner (PubMed:31782145, PubMed:34905536). Maternal neurogenic factor involved in Notch signaling-dependent mesectodermal and neuroectodermal specification during early embryogenesis (PubMed:14595834, PubMed:18331889, PubMed:31782145, PubMed:34905536). Functions cooperatively with bisc/TM2D1 and amrt/TM2D2 (PubMed:34905536). Required for maintenance of neuronal function (PubMed:34905536). Involved in imaginal specification of eyes and wings (PubMed:18331889).</text>
</comment>
<comment type="subcellular location">
    <subcellularLocation>
        <location evidence="8">Membrane</location>
        <topology evidence="1">Multi-pass membrane protein</topology>
    </subcellularLocation>
    <subcellularLocation>
        <location evidence="8">Vesicle</location>
    </subcellularLocation>
</comment>
<comment type="tissue specificity">
    <text evidence="8">Expressed in female ovary, mainly in nurse cells (at protein level) (PubMed:34905536). Expressed in the brain at low levels (at protein level) (PubMed:34905536).</text>
</comment>
<comment type="developmental stage">
    <text evidence="4 5 7">Maternal expression is important during embryonic development, while zygotic expression may be dispensable (PubMed:14595834, PubMed:18331889, PubMed:31782145). Expressed in larval imaginal discs (PubMed:18331889).</text>
</comment>
<comment type="disruption phenotype">
    <text evidence="4 6 7 8">Viable but females are sterile (PubMed:14595834, PubMed:31782145, PubMed:34905536). Reduced adult lifespan (PubMed:34905536). Adults display climbing defects progressing in severity over time due to age-dependent decline in neuronal function (PubMed:34905536). No morphological defects of the eye, wing, notum or leg (PubMed:31782145, PubMed:34905536). Eggs produced by mutant mothers fail to hatch and embryos display neural hyperplasia (PubMed:14595834, PubMed:27764101, PubMed:31782145, PubMed:34905536). Some lines of mutant flies show reduced eye size and nicked wing margins, however these phenotypes are probably due to disruption of neighboring genes (PubMed:14595834, PubMed:31782145).</text>
</comment>
<comment type="miscellaneous">
    <text evidence="9">The name 'almondex' was given due to the slight almond-shaped eye phenotype of some mutant fly lines (the '-ex' denoting the gene is located on the X chromosome).</text>
</comment>
<comment type="similarity">
    <text evidence="11">Belongs to the TM2 family.</text>
</comment>
<reference key="1">
    <citation type="journal article" date="2003" name="Genesis">
        <title>Differential requirements for the neurogenic gene almondex during Drosophila melanogaster development.</title>
        <authorList>
            <person name="Michellod M.-A.E."/>
            <person name="Forquignon F."/>
            <person name="Santamaria P."/>
            <person name="Randsholt N.B."/>
        </authorList>
    </citation>
    <scope>NUCLEOTIDE SEQUENCE [MRNA]</scope>
    <scope>FUNCTION</scope>
    <scope>DEVELOPMENTAL STAGE</scope>
    <scope>DISRUPTION PHENOTYPE</scope>
    <source>
        <tissue>Ovary</tissue>
    </source>
</reference>
<reference key="2">
    <citation type="journal article" date="2000" name="Science">
        <title>The genome sequence of Drosophila melanogaster.</title>
        <authorList>
            <person name="Adams M.D."/>
            <person name="Celniker S.E."/>
            <person name="Holt R.A."/>
            <person name="Evans C.A."/>
            <person name="Gocayne J.D."/>
            <person name="Amanatides P.G."/>
            <person name="Scherer S.E."/>
            <person name="Li P.W."/>
            <person name="Hoskins R.A."/>
            <person name="Galle R.F."/>
            <person name="George R.A."/>
            <person name="Lewis S.E."/>
            <person name="Richards S."/>
            <person name="Ashburner M."/>
            <person name="Henderson S.N."/>
            <person name="Sutton G.G."/>
            <person name="Wortman J.R."/>
            <person name="Yandell M.D."/>
            <person name="Zhang Q."/>
            <person name="Chen L.X."/>
            <person name="Brandon R.C."/>
            <person name="Rogers Y.-H.C."/>
            <person name="Blazej R.G."/>
            <person name="Champe M."/>
            <person name="Pfeiffer B.D."/>
            <person name="Wan K.H."/>
            <person name="Doyle C."/>
            <person name="Baxter E.G."/>
            <person name="Helt G."/>
            <person name="Nelson C.R."/>
            <person name="Miklos G.L.G."/>
            <person name="Abril J.F."/>
            <person name="Agbayani A."/>
            <person name="An H.-J."/>
            <person name="Andrews-Pfannkoch C."/>
            <person name="Baldwin D."/>
            <person name="Ballew R.M."/>
            <person name="Basu A."/>
            <person name="Baxendale J."/>
            <person name="Bayraktaroglu L."/>
            <person name="Beasley E.M."/>
            <person name="Beeson K.Y."/>
            <person name="Benos P.V."/>
            <person name="Berman B.P."/>
            <person name="Bhandari D."/>
            <person name="Bolshakov S."/>
            <person name="Borkova D."/>
            <person name="Botchan M.R."/>
            <person name="Bouck J."/>
            <person name="Brokstein P."/>
            <person name="Brottier P."/>
            <person name="Burtis K.C."/>
            <person name="Busam D.A."/>
            <person name="Butler H."/>
            <person name="Cadieu E."/>
            <person name="Center A."/>
            <person name="Chandra I."/>
            <person name="Cherry J.M."/>
            <person name="Cawley S."/>
            <person name="Dahlke C."/>
            <person name="Davenport L.B."/>
            <person name="Davies P."/>
            <person name="de Pablos B."/>
            <person name="Delcher A."/>
            <person name="Deng Z."/>
            <person name="Mays A.D."/>
            <person name="Dew I."/>
            <person name="Dietz S.M."/>
            <person name="Dodson K."/>
            <person name="Doup L.E."/>
            <person name="Downes M."/>
            <person name="Dugan-Rocha S."/>
            <person name="Dunkov B.C."/>
            <person name="Dunn P."/>
            <person name="Durbin K.J."/>
            <person name="Evangelista C.C."/>
            <person name="Ferraz C."/>
            <person name="Ferriera S."/>
            <person name="Fleischmann W."/>
            <person name="Fosler C."/>
            <person name="Gabrielian A.E."/>
            <person name="Garg N.S."/>
            <person name="Gelbart W.M."/>
            <person name="Glasser K."/>
            <person name="Glodek A."/>
            <person name="Gong F."/>
            <person name="Gorrell J.H."/>
            <person name="Gu Z."/>
            <person name="Guan P."/>
            <person name="Harris M."/>
            <person name="Harris N.L."/>
            <person name="Harvey D.A."/>
            <person name="Heiman T.J."/>
            <person name="Hernandez J.R."/>
            <person name="Houck J."/>
            <person name="Hostin D."/>
            <person name="Houston K.A."/>
            <person name="Howland T.J."/>
            <person name="Wei M.-H."/>
            <person name="Ibegwam C."/>
            <person name="Jalali M."/>
            <person name="Kalush F."/>
            <person name="Karpen G.H."/>
            <person name="Ke Z."/>
            <person name="Kennison J.A."/>
            <person name="Ketchum K.A."/>
            <person name="Kimmel B.E."/>
            <person name="Kodira C.D."/>
            <person name="Kraft C.L."/>
            <person name="Kravitz S."/>
            <person name="Kulp D."/>
            <person name="Lai Z."/>
            <person name="Lasko P."/>
            <person name="Lei Y."/>
            <person name="Levitsky A.A."/>
            <person name="Li J.H."/>
            <person name="Li Z."/>
            <person name="Liang Y."/>
            <person name="Lin X."/>
            <person name="Liu X."/>
            <person name="Mattei B."/>
            <person name="McIntosh T.C."/>
            <person name="McLeod M.P."/>
            <person name="McPherson D."/>
            <person name="Merkulov G."/>
            <person name="Milshina N.V."/>
            <person name="Mobarry C."/>
            <person name="Morris J."/>
            <person name="Moshrefi A."/>
            <person name="Mount S.M."/>
            <person name="Moy M."/>
            <person name="Murphy B."/>
            <person name="Murphy L."/>
            <person name="Muzny D.M."/>
            <person name="Nelson D.L."/>
            <person name="Nelson D.R."/>
            <person name="Nelson K.A."/>
            <person name="Nixon K."/>
            <person name="Nusskern D.R."/>
            <person name="Pacleb J.M."/>
            <person name="Palazzolo M."/>
            <person name="Pittman G.S."/>
            <person name="Pan S."/>
            <person name="Pollard J."/>
            <person name="Puri V."/>
            <person name="Reese M.G."/>
            <person name="Reinert K."/>
            <person name="Remington K."/>
            <person name="Saunders R.D.C."/>
            <person name="Scheeler F."/>
            <person name="Shen H."/>
            <person name="Shue B.C."/>
            <person name="Siden-Kiamos I."/>
            <person name="Simpson M."/>
            <person name="Skupski M.P."/>
            <person name="Smith T.J."/>
            <person name="Spier E."/>
            <person name="Spradling A.C."/>
            <person name="Stapleton M."/>
            <person name="Strong R."/>
            <person name="Sun E."/>
            <person name="Svirskas R."/>
            <person name="Tector C."/>
            <person name="Turner R."/>
            <person name="Venter E."/>
            <person name="Wang A.H."/>
            <person name="Wang X."/>
            <person name="Wang Z.-Y."/>
            <person name="Wassarman D.A."/>
            <person name="Weinstock G.M."/>
            <person name="Weissenbach J."/>
            <person name="Williams S.M."/>
            <person name="Woodage T."/>
            <person name="Worley K.C."/>
            <person name="Wu D."/>
            <person name="Yang S."/>
            <person name="Yao Q.A."/>
            <person name="Ye J."/>
            <person name="Yeh R.-F."/>
            <person name="Zaveri J.S."/>
            <person name="Zhan M."/>
            <person name="Zhang G."/>
            <person name="Zhao Q."/>
            <person name="Zheng L."/>
            <person name="Zheng X.H."/>
            <person name="Zhong F.N."/>
            <person name="Zhong W."/>
            <person name="Zhou X."/>
            <person name="Zhu S.C."/>
            <person name="Zhu X."/>
            <person name="Smith H.O."/>
            <person name="Gibbs R.A."/>
            <person name="Myers E.W."/>
            <person name="Rubin G.M."/>
            <person name="Venter J.C."/>
        </authorList>
    </citation>
    <scope>NUCLEOTIDE SEQUENCE [LARGE SCALE GENOMIC DNA]</scope>
    <source>
        <strain>Berkeley</strain>
    </source>
</reference>
<reference key="3">
    <citation type="journal article" date="2002" name="Genome Biol.">
        <title>Annotation of the Drosophila melanogaster euchromatic genome: a systematic review.</title>
        <authorList>
            <person name="Misra S."/>
            <person name="Crosby M.A."/>
            <person name="Mungall C.J."/>
            <person name="Matthews B.B."/>
            <person name="Campbell K.S."/>
            <person name="Hradecky P."/>
            <person name="Huang Y."/>
            <person name="Kaminker J.S."/>
            <person name="Millburn G.H."/>
            <person name="Prochnik S.E."/>
            <person name="Smith C.D."/>
            <person name="Tupy J.L."/>
            <person name="Whitfield E.J."/>
            <person name="Bayraktaroglu L."/>
            <person name="Berman B.P."/>
            <person name="Bettencourt B.R."/>
            <person name="Celniker S.E."/>
            <person name="de Grey A.D.N.J."/>
            <person name="Drysdale R.A."/>
            <person name="Harris N.L."/>
            <person name="Richter J."/>
            <person name="Russo S."/>
            <person name="Schroeder A.J."/>
            <person name="Shu S.Q."/>
            <person name="Stapleton M."/>
            <person name="Yamada C."/>
            <person name="Ashburner M."/>
            <person name="Gelbart W.M."/>
            <person name="Rubin G.M."/>
            <person name="Lewis S.E."/>
        </authorList>
    </citation>
    <scope>GENOME REANNOTATION</scope>
    <source>
        <strain>Berkeley</strain>
    </source>
</reference>
<reference key="4">
    <citation type="journal article" date="2000" name="Science">
        <title>A Drosophila complementary DNA resource.</title>
        <authorList>
            <person name="Rubin G.M."/>
            <person name="Hong L."/>
            <person name="Brokstein P."/>
            <person name="Evans-Holm M."/>
            <person name="Frise E."/>
            <person name="Stapleton M."/>
            <person name="Harvey D.A."/>
        </authorList>
    </citation>
    <scope>NUCLEOTIDE SEQUENCE [LARGE SCALE MRNA]</scope>
    <source>
        <strain>Berkeley</strain>
        <tissue>Head</tissue>
    </source>
</reference>
<reference key="5">
    <citation type="journal article" date="2008" name="Brain Res. Bull.">
        <title>Implication of the Drosophila beta-amyloid peptide binding-like protein AMX in Notch signaling during early neurogenesis.</title>
        <authorList>
            <person name="Michellod M.A."/>
            <person name="Randsholt N.B."/>
        </authorList>
    </citation>
    <scope>FUNCTION</scope>
    <scope>DEVELOPMENTAL STAGE</scope>
    <scope>MUTAGENESIS OF 190-LEU--ARG-192 AND 239-ASP--PHE-241</scope>
</reference>
<reference key="6">
    <citation type="journal article" date="2016" name="PLoS Genet.">
        <title>Rare Functional Variant in TM2D3 is Associated with Late-Onset Alzheimer's Disease.</title>
        <authorList>
            <consortium name="Cohorts for Heart and Aging Research in Genomic Epidemiology consortium"/>
            <consortium name="Alzheimer's Disease Genetic Consortium"/>
            <consortium name="Genetic and Environmental Risk in Alzheimer's Disease consortium"/>
            <person name="Jakobsdottir J."/>
            <person name="van der Lee S.J."/>
            <person name="Bis J.C."/>
            <person name="Chouraki V."/>
            <person name="Li-Kroeger D."/>
            <person name="Yamamoto S."/>
            <person name="Grove M.L."/>
            <person name="Naj A."/>
            <person name="Vronskaya M."/>
            <person name="Salazar J.L."/>
            <person name="DeStefano A.L."/>
            <person name="Brody J.A."/>
            <person name="Smith A.V."/>
            <person name="Amin N."/>
            <person name="Sims R."/>
            <person name="Ibrahim-Verbaas C.A."/>
            <person name="Choi S.H."/>
            <person name="Satizabal C.L."/>
            <person name="Lopez O.L."/>
            <person name="Beiser A."/>
            <person name="Ikram M.A."/>
            <person name="Garcia M.E."/>
            <person name="Hayward C."/>
            <person name="Varga T.V."/>
            <person name="Ripatti S."/>
            <person name="Franks P.W."/>
            <person name="Hallmans G."/>
            <person name="Rolandsson O."/>
            <person name="Jansson J.H."/>
            <person name="Porteous D.J."/>
            <person name="Salomaa V."/>
            <person name="Eiriksdottir G."/>
            <person name="Rice K.M."/>
            <person name="Bellen H.J."/>
            <person name="Levy D."/>
            <person name="Uitterlinden A.G."/>
            <person name="Emilsson V."/>
            <person name="Rotter J.I."/>
            <person name="Aspelund T."/>
            <person name="O'Donnell C.J."/>
            <person name="Fitzpatrick A.L."/>
            <person name="Launer L.J."/>
            <person name="Hofman A."/>
            <person name="Wang L.S."/>
            <person name="Williams J."/>
            <person name="Schellenberg G.D."/>
            <person name="Boerwinkle E."/>
            <person name="Psaty B.M."/>
            <person name="Seshadri S."/>
            <person name="Shulman J.M."/>
            <person name="Gudnason V."/>
            <person name="van Duijn C.M."/>
        </authorList>
    </citation>
    <scope>DISRUPTION PHENOTYPE</scope>
</reference>
<reference key="7">
    <citation type="journal article" date="2020" name="Dev. Growth Differ.">
        <title>Maternal almondex, a neurogenic gene, is required for proper subcellular Notch distribution in early Drosophila embryogenesis.</title>
        <authorList>
            <person name="Das P."/>
            <person name="Salazar J.L."/>
            <person name="Li-Kroeger D."/>
            <person name="Yamamoto S."/>
            <person name="Nakamura M."/>
            <person name="Sasamura T."/>
            <person name="Inaki M."/>
            <person name="Masuda W."/>
            <person name="Kitagawa M."/>
            <person name="Yamakawa T."/>
            <person name="Matsuno K."/>
        </authorList>
    </citation>
    <scope>FUNCTION</scope>
    <scope>DEVELOPMENTAL STAGE</scope>
    <scope>DISRUPTION PHENOTYPE</scope>
</reference>
<reference key="8">
    <citation type="journal article" date="2021" name="PLoS Genet.">
        <title>TM2D genes regulate Notch signaling and neuronal function in Drosophila.</title>
        <authorList>
            <person name="Salazar J.L."/>
            <person name="Yang S.A."/>
            <person name="Lin Y.Q."/>
            <person name="Li-Kroeger D."/>
            <person name="Marcogliese P.C."/>
            <person name="Deal S.L."/>
            <person name="Neely G.G."/>
            <person name="Yamamoto S."/>
        </authorList>
    </citation>
    <scope>FUNCTION</scope>
    <scope>SUBCELLULAR LOCATION</scope>
    <scope>TISSUE SPECIFICITY</scope>
    <scope>DISRUPTION PHENOTYPE</scope>
</reference>
<gene>
    <name evidence="12" type="primary">amx</name>
    <name evidence="12" type="ORF">CG12127</name>
</gene>